<evidence type="ECO:0000250" key="1"/>
<evidence type="ECO:0000255" key="2">
    <source>
        <dbReference type="PROSITE-ProRule" id="PRU00723"/>
    </source>
</evidence>
<evidence type="ECO:0000256" key="3">
    <source>
        <dbReference type="SAM" id="MobiDB-lite"/>
    </source>
</evidence>
<evidence type="ECO:0007744" key="4">
    <source>
    </source>
</evidence>
<gene>
    <name type="primary">ZFN2</name>
    <name type="ordered locus">At2g32930</name>
    <name type="ORF">T21L14.13</name>
</gene>
<accession>O48772</accession>
<dbReference type="EMBL" id="AF138744">
    <property type="protein sequence ID" value="AAD33770.1"/>
    <property type="molecule type" value="mRNA"/>
</dbReference>
<dbReference type="EMBL" id="AC003033">
    <property type="protein sequence ID" value="AAB91975.1"/>
    <property type="molecule type" value="Genomic_DNA"/>
</dbReference>
<dbReference type="EMBL" id="CP002685">
    <property type="protein sequence ID" value="AEC08763.1"/>
    <property type="molecule type" value="Genomic_DNA"/>
</dbReference>
<dbReference type="PIR" id="T01114">
    <property type="entry name" value="T01114"/>
</dbReference>
<dbReference type="RefSeq" id="NP_565758.1">
    <molecule id="O48772-1"/>
    <property type="nucleotide sequence ID" value="NM_128853.2"/>
</dbReference>
<dbReference type="BioGRID" id="3202">
    <property type="interactions" value="2"/>
</dbReference>
<dbReference type="FunCoup" id="O48772">
    <property type="interactions" value="147"/>
</dbReference>
<dbReference type="STRING" id="3702.O48772"/>
<dbReference type="iPTMnet" id="O48772"/>
<dbReference type="PaxDb" id="3702-AT2G32930.2"/>
<dbReference type="ProteomicsDB" id="240573">
    <molecule id="O48772-1"/>
</dbReference>
<dbReference type="EnsemblPlants" id="AT2G32930.1">
    <molecule id="O48772-1"/>
    <property type="protein sequence ID" value="AT2G32930.1"/>
    <property type="gene ID" value="AT2G32930"/>
</dbReference>
<dbReference type="GeneID" id="817855"/>
<dbReference type="Gramene" id="AT2G32930.1">
    <molecule id="O48772-1"/>
    <property type="protein sequence ID" value="AT2G32930.1"/>
    <property type="gene ID" value="AT2G32930"/>
</dbReference>
<dbReference type="KEGG" id="ath:AT2G32930"/>
<dbReference type="Araport" id="AT2G32930"/>
<dbReference type="TAIR" id="AT2G32930">
    <property type="gene designation" value="ZFN2"/>
</dbReference>
<dbReference type="eggNOG" id="KOG1677">
    <property type="taxonomic scope" value="Eukaryota"/>
</dbReference>
<dbReference type="HOGENOM" id="CLU_033292_2_0_1"/>
<dbReference type="InParanoid" id="O48772"/>
<dbReference type="OrthoDB" id="411372at2759"/>
<dbReference type="PhylomeDB" id="O48772"/>
<dbReference type="PRO" id="PR:O48772"/>
<dbReference type="Proteomes" id="UP000006548">
    <property type="component" value="Chromosome 2"/>
</dbReference>
<dbReference type="ExpressionAtlas" id="O48772">
    <property type="expression patterns" value="baseline and differential"/>
</dbReference>
<dbReference type="GO" id="GO:0005634">
    <property type="term" value="C:nucleus"/>
    <property type="evidence" value="ECO:0007669"/>
    <property type="project" value="UniProtKB-SubCell"/>
</dbReference>
<dbReference type="GO" id="GO:0003677">
    <property type="term" value="F:DNA binding"/>
    <property type="evidence" value="ECO:0007669"/>
    <property type="project" value="UniProtKB-KW"/>
</dbReference>
<dbReference type="GO" id="GO:0003729">
    <property type="term" value="F:mRNA binding"/>
    <property type="evidence" value="ECO:0007669"/>
    <property type="project" value="UniProtKB-ARBA"/>
</dbReference>
<dbReference type="GO" id="GO:0008270">
    <property type="term" value="F:zinc ion binding"/>
    <property type="evidence" value="ECO:0007669"/>
    <property type="project" value="UniProtKB-KW"/>
</dbReference>
<dbReference type="Gene3D" id="2.30.30.1190">
    <property type="match status" value="1"/>
</dbReference>
<dbReference type="Gene3D" id="4.10.1000.10">
    <property type="entry name" value="Zinc finger, CCCH-type"/>
    <property type="match status" value="2"/>
</dbReference>
<dbReference type="InterPro" id="IPR050974">
    <property type="entry name" value="Plant_ZF_CCCH"/>
</dbReference>
<dbReference type="InterPro" id="IPR000571">
    <property type="entry name" value="Znf_CCCH"/>
</dbReference>
<dbReference type="InterPro" id="IPR036855">
    <property type="entry name" value="Znf_CCCH_sf"/>
</dbReference>
<dbReference type="PANTHER" id="PTHR12506">
    <property type="entry name" value="PROTEIN PHOSPHATASE RELATED"/>
    <property type="match status" value="1"/>
</dbReference>
<dbReference type="PANTHER" id="PTHR12506:SF50">
    <property type="entry name" value="ZINC FINGER CCCH DOMAIN-CONTAINING PROTEIN 26"/>
    <property type="match status" value="1"/>
</dbReference>
<dbReference type="Pfam" id="PF00642">
    <property type="entry name" value="zf-CCCH"/>
    <property type="match status" value="5"/>
</dbReference>
<dbReference type="SMART" id="SM00356">
    <property type="entry name" value="ZnF_C3H1"/>
    <property type="match status" value="5"/>
</dbReference>
<dbReference type="SUPFAM" id="SSF90229">
    <property type="entry name" value="CCCH zinc finger"/>
    <property type="match status" value="4"/>
</dbReference>
<dbReference type="PROSITE" id="PS50103">
    <property type="entry name" value="ZF_C3H1"/>
    <property type="match status" value="5"/>
</dbReference>
<proteinExistence type="evidence at protein level"/>
<reference key="1">
    <citation type="submission" date="1999-03" db="EMBL/GenBank/DDBJ databases">
        <title>Characterization of zinc finger protein ZFN-2 in Arabidopsis thaliana.</title>
        <authorList>
            <person name="Choi S."/>
            <person name="Lee J."/>
            <person name="Yi H."/>
            <person name="Shin B."/>
            <person name="Choi G."/>
        </authorList>
    </citation>
    <scope>NUCLEOTIDE SEQUENCE [MRNA]</scope>
    <source>
        <strain>cv. Columbia</strain>
    </source>
</reference>
<reference key="2">
    <citation type="journal article" date="1999" name="Nature">
        <title>Sequence and analysis of chromosome 2 of the plant Arabidopsis thaliana.</title>
        <authorList>
            <person name="Lin X."/>
            <person name="Kaul S."/>
            <person name="Rounsley S.D."/>
            <person name="Shea T.P."/>
            <person name="Benito M.-I."/>
            <person name="Town C.D."/>
            <person name="Fujii C.Y."/>
            <person name="Mason T.M."/>
            <person name="Bowman C.L."/>
            <person name="Barnstead M.E."/>
            <person name="Feldblyum T.V."/>
            <person name="Buell C.R."/>
            <person name="Ketchum K.A."/>
            <person name="Lee J.J."/>
            <person name="Ronning C.M."/>
            <person name="Koo H.L."/>
            <person name="Moffat K.S."/>
            <person name="Cronin L.A."/>
            <person name="Shen M."/>
            <person name="Pai G."/>
            <person name="Van Aken S."/>
            <person name="Umayam L."/>
            <person name="Tallon L.J."/>
            <person name="Gill J.E."/>
            <person name="Adams M.D."/>
            <person name="Carrera A.J."/>
            <person name="Creasy T.H."/>
            <person name="Goodman H.M."/>
            <person name="Somerville C.R."/>
            <person name="Copenhaver G.P."/>
            <person name="Preuss D."/>
            <person name="Nierman W.C."/>
            <person name="White O."/>
            <person name="Eisen J.A."/>
            <person name="Salzberg S.L."/>
            <person name="Fraser C.M."/>
            <person name="Venter J.C."/>
        </authorList>
    </citation>
    <scope>NUCLEOTIDE SEQUENCE [LARGE SCALE GENOMIC DNA]</scope>
    <source>
        <strain>cv. Columbia</strain>
    </source>
</reference>
<reference key="3">
    <citation type="journal article" date="2017" name="Plant J.">
        <title>Araport11: a complete reannotation of the Arabidopsis thaliana reference genome.</title>
        <authorList>
            <person name="Cheng C.Y."/>
            <person name="Krishnakumar V."/>
            <person name="Chan A.P."/>
            <person name="Thibaud-Nissen F."/>
            <person name="Schobel S."/>
            <person name="Town C.D."/>
        </authorList>
    </citation>
    <scope>GENOME REANNOTATION</scope>
    <source>
        <strain>cv. Columbia</strain>
    </source>
</reference>
<reference key="4">
    <citation type="journal article" date="2008" name="BMC Genomics">
        <title>Genome-wide analysis of CCCH zinc finger family in Arabidopsis and rice.</title>
        <authorList>
            <person name="Wang D."/>
            <person name="Guo Y."/>
            <person name="Wu C."/>
            <person name="Yang G."/>
            <person name="Li Y."/>
            <person name="Zheng C."/>
        </authorList>
    </citation>
    <scope>NOMENCLATURE</scope>
</reference>
<reference key="5">
    <citation type="journal article" date="2012" name="Mol. Cell. Proteomics">
        <title>Comparative large-scale characterisation of plant vs. mammal proteins reveals similar and idiosyncratic N-alpha acetylation features.</title>
        <authorList>
            <person name="Bienvenut W.V."/>
            <person name="Sumpton D."/>
            <person name="Martinez A."/>
            <person name="Lilla S."/>
            <person name="Espagne C."/>
            <person name="Meinnel T."/>
            <person name="Giglione C."/>
        </authorList>
    </citation>
    <scope>ACETYLATION [LARGE SCALE ANALYSIS] AT SER-2</scope>
    <scope>CLEAVAGE OF INITIATOR METHIONINE [LARGE SCALE ANALYSIS]</scope>
    <scope>IDENTIFICATION BY MASS SPECTROMETRY [LARGE SCALE ANALYSIS]</scope>
</reference>
<feature type="initiator methionine" description="Removed" evidence="4">
    <location>
        <position position="1"/>
    </location>
</feature>
<feature type="chain" id="PRO_0000213913" description="Zinc finger CCCH domain-containing protein 26">
    <location>
        <begin position="2"/>
        <end position="453"/>
    </location>
</feature>
<feature type="zinc finger region" description="C3H1-type 1" evidence="2">
    <location>
        <begin position="44"/>
        <end position="72"/>
    </location>
</feature>
<feature type="zinc finger region" description="C3H1-type 2" evidence="2">
    <location>
        <begin position="95"/>
        <end position="112"/>
    </location>
</feature>
<feature type="zinc finger region" description="C3H1-type 3" evidence="2">
    <location>
        <begin position="129"/>
        <end position="157"/>
    </location>
</feature>
<feature type="zinc finger region" description="C3H1-type 4" evidence="2">
    <location>
        <begin position="261"/>
        <end position="289"/>
    </location>
</feature>
<feature type="zinc finger region" description="C3H1-type 5" evidence="2">
    <location>
        <begin position="307"/>
        <end position="335"/>
    </location>
</feature>
<feature type="region of interest" description="Disordered" evidence="3">
    <location>
        <begin position="1"/>
        <end position="47"/>
    </location>
</feature>
<feature type="region of interest" description="Disordered" evidence="3">
    <location>
        <begin position="360"/>
        <end position="453"/>
    </location>
</feature>
<feature type="compositionally biased region" description="Polar residues" evidence="3">
    <location>
        <begin position="1"/>
        <end position="15"/>
    </location>
</feature>
<feature type="compositionally biased region" description="Basic and acidic residues" evidence="3">
    <location>
        <begin position="17"/>
        <end position="32"/>
    </location>
</feature>
<feature type="compositionally biased region" description="Polar residues" evidence="3">
    <location>
        <begin position="360"/>
        <end position="379"/>
    </location>
</feature>
<feature type="compositionally biased region" description="Basic and acidic residues" evidence="3">
    <location>
        <begin position="391"/>
        <end position="407"/>
    </location>
</feature>
<feature type="compositionally biased region" description="Polar residues" evidence="3">
    <location>
        <begin position="413"/>
        <end position="422"/>
    </location>
</feature>
<feature type="compositionally biased region" description="Basic and acidic residues" evidence="3">
    <location>
        <begin position="441"/>
        <end position="453"/>
    </location>
</feature>
<feature type="modified residue" description="N-acetylserine" evidence="4">
    <location>
        <position position="2"/>
    </location>
</feature>
<sequence length="453" mass="49747">MSETQQQVQNSTGSIRSPDKIEDTFRRMKVNEDNMEQSSPYPDRPGERDCQFFLRTGQCGYGNSCRYNHPLTNLPQGIIYYRDQLPERVGQPDCETGACKYGPTCKYHHPKDRNGAGPVLFNVLGLPMRQGEKPCPYYMQTGLCRFGVACKFHHPHPHSQPSNGHSAYAMSSFPSVGFPYASGMTMVSLPPATYGAIPRPQVPQSQAYMPYMVAPSQGLLPPQGWATYMTASNPIYNMKTQLDSSSSASVAVTVTSHHHSFSERAECRFFMNTGTCKYGDDCKYSHPKERLLQSPPTLLNPIVLPARPGQPACGNFKAYGFCKFGANCKFDHSMLLNPYNNTGLAMSSLPTPYPYAPPVSTNLRISSPPSPSDMTTLSNGKPAAAEAQSLETEKQDDSPTEPEKSEVEDSLPPNGSDSTSLPNDKPDAETEKQDDDSAELDSSKVQDSSDKST</sequence>
<protein>
    <recommendedName>
        <fullName>Zinc finger CCCH domain-containing protein 26</fullName>
        <shortName>AtC3H26</shortName>
    </recommendedName>
    <alternativeName>
        <fullName>Zinc finger CCCH domain-containing protein ZFN2</fullName>
    </alternativeName>
</protein>
<keyword id="KW-0007">Acetylation</keyword>
<keyword id="KW-0025">Alternative splicing</keyword>
<keyword id="KW-0238">DNA-binding</keyword>
<keyword id="KW-0479">Metal-binding</keyword>
<keyword id="KW-0539">Nucleus</keyword>
<keyword id="KW-1185">Reference proteome</keyword>
<keyword id="KW-0677">Repeat</keyword>
<keyword id="KW-0862">Zinc</keyword>
<keyword id="KW-0863">Zinc-finger</keyword>
<comment type="subcellular location">
    <subcellularLocation>
        <location evidence="1">Nucleus</location>
    </subcellularLocation>
</comment>
<comment type="alternative products">
    <event type="alternative splicing"/>
    <isoform>
        <id>O48772-1</id>
        <name>1</name>
        <sequence type="displayed"/>
    </isoform>
    <text>A number of isoforms are produced. According to EST sequences.</text>
</comment>
<organism>
    <name type="scientific">Arabidopsis thaliana</name>
    <name type="common">Mouse-ear cress</name>
    <dbReference type="NCBI Taxonomy" id="3702"/>
    <lineage>
        <taxon>Eukaryota</taxon>
        <taxon>Viridiplantae</taxon>
        <taxon>Streptophyta</taxon>
        <taxon>Embryophyta</taxon>
        <taxon>Tracheophyta</taxon>
        <taxon>Spermatophyta</taxon>
        <taxon>Magnoliopsida</taxon>
        <taxon>eudicotyledons</taxon>
        <taxon>Gunneridae</taxon>
        <taxon>Pentapetalae</taxon>
        <taxon>rosids</taxon>
        <taxon>malvids</taxon>
        <taxon>Brassicales</taxon>
        <taxon>Brassicaceae</taxon>
        <taxon>Camelineae</taxon>
        <taxon>Arabidopsis</taxon>
    </lineage>
</organism>
<name>C3H26_ARATH</name>